<protein>
    <recommendedName>
        <fullName>T-box transcription factor TBX5-A</fullName>
        <shortName>zftbx5a</shortName>
    </recommendedName>
    <alternativeName>
        <fullName>T-box protein 5</fullName>
        <shortName>zTbx5</shortName>
    </alternativeName>
</protein>
<comment type="function">
    <text evidence="1 5 6">Required for pectoral fin formation. Together with tbx5b, involved in eye and heart development. Required for the looping stage of heart development. May bind to the core DNA motif of promoters.</text>
</comment>
<comment type="subunit">
    <text evidence="1">Monomer. Homodimer (via the T-box); binds DNA as homodimer.</text>
</comment>
<comment type="subcellular location">
    <subcellularLocation>
        <location evidence="1 2">Nucleus</location>
    </subcellularLocation>
    <subcellularLocation>
        <location evidence="1">Cytoplasm</location>
    </subcellularLocation>
    <text evidence="1">Shuttles between the cytoplasm and the nucleus.</text>
</comment>
<comment type="tissue specificity">
    <text evidence="4 5 6">Expressed in the dorsal optic cup of developing eye, pectoral fin buds and heart. At 31 hpf, when the pectoral fin buds have begun bulging outwards, restricted expression is detected throughout the mesenchyme of the early fin buds and these high levels of expression continue until later stages.</text>
</comment>
<comment type="domain">
    <text evidence="1">The T-Box domain binds to double-stranded DNA.</text>
</comment>
<comment type="sequence caution" evidence="7">
    <conflict type="frameshift">
        <sequence resource="EMBL-CDS" id="AAF06733"/>
    </conflict>
</comment>
<feature type="chain" id="PRO_0000262468" description="T-box transcription factor TBX5-A">
    <location>
        <begin position="1"/>
        <end position="492"/>
    </location>
</feature>
<feature type="DNA-binding region" description="T-box" evidence="1 2">
    <location>
        <begin position="62"/>
        <end position="237"/>
    </location>
</feature>
<feature type="region of interest" description="Disordered" evidence="3">
    <location>
        <begin position="1"/>
        <end position="43"/>
    </location>
</feature>
<feature type="region of interest" description="Disordered" evidence="3">
    <location>
        <begin position="331"/>
        <end position="352"/>
    </location>
</feature>
<feature type="compositionally biased region" description="Basic and acidic residues" evidence="3">
    <location>
        <begin position="17"/>
        <end position="30"/>
    </location>
</feature>
<feature type="compositionally biased region" description="Polar residues" evidence="3">
    <location>
        <begin position="31"/>
        <end position="43"/>
    </location>
</feature>
<feature type="sequence conflict" description="In Ref. 2; AAF59837." evidence="7" ref="2">
    <original>S</original>
    <variation>P</variation>
    <location>
        <position position="282"/>
    </location>
</feature>
<feature type="sequence conflict" description="In Ref. 1; AAF06733, 2; AAF59837 and 4; AAF22296." evidence="7" ref="1 2 4">
    <original>S</original>
    <variation>T</variation>
    <location>
        <position position="284"/>
    </location>
</feature>
<feature type="sequence conflict" description="In Ref. 1; AAF06733 and 2; AAF59837." evidence="7" ref="1 2">
    <original>G</original>
    <variation>S</variation>
    <location>
        <position position="296"/>
    </location>
</feature>
<feature type="sequence conflict" description="In Ref. 4; AAF22296." evidence="7" ref="4">
    <original>V</original>
    <variation>G</variation>
    <location>
        <position position="402"/>
    </location>
</feature>
<gene>
    <name type="primary">tbx5a</name>
    <name type="synonym">heartstrings</name>
    <name type="synonym">hst</name>
    <name type="synonym">tbx5</name>
    <name type="synonym">tbx5.1</name>
    <name type="ORF">si:ch211-245e21.2</name>
</gene>
<reference key="1">
    <citation type="journal article" date="1999" name="Mech. Dev.">
        <title>Differential expression of Tbx4 and Tbx5 in Zebrafish fin buds.</title>
        <authorList>
            <person name="Tamura K."/>
            <person name="Yonei-Tamura S."/>
            <person name="Belmonte J.C.I."/>
        </authorList>
    </citation>
    <scope>NUCLEOTIDE SEQUENCE [MRNA]</scope>
    <scope>DEVELOPMENTAL STAGE</scope>
</reference>
<reference key="2">
    <citation type="journal article" date="2000" name="Dev. Genes Evol.">
        <title>The evolution of paired appendages in vertebrates: T-box genes in the zebrafish.</title>
        <authorList>
            <person name="Ruvinsky I."/>
            <person name="Oates A.C."/>
            <person name="Silver L.M."/>
            <person name="Ho R.K."/>
        </authorList>
    </citation>
    <scope>NUCLEOTIDE SEQUENCE [MRNA]</scope>
    <scope>TISSUE SPECIFICITY</scope>
</reference>
<reference key="3">
    <citation type="journal article" date="2013" name="Nature">
        <title>The zebrafish reference genome sequence and its relationship to the human genome.</title>
        <authorList>
            <person name="Howe K."/>
            <person name="Clark M.D."/>
            <person name="Torroja C.F."/>
            <person name="Torrance J."/>
            <person name="Berthelot C."/>
            <person name="Muffato M."/>
            <person name="Collins J.E."/>
            <person name="Humphray S."/>
            <person name="McLaren K."/>
            <person name="Matthews L."/>
            <person name="McLaren S."/>
            <person name="Sealy I."/>
            <person name="Caccamo M."/>
            <person name="Churcher C."/>
            <person name="Scott C."/>
            <person name="Barrett J.C."/>
            <person name="Koch R."/>
            <person name="Rauch G.J."/>
            <person name="White S."/>
            <person name="Chow W."/>
            <person name="Kilian B."/>
            <person name="Quintais L.T."/>
            <person name="Guerra-Assuncao J.A."/>
            <person name="Zhou Y."/>
            <person name="Gu Y."/>
            <person name="Yen J."/>
            <person name="Vogel J.H."/>
            <person name="Eyre T."/>
            <person name="Redmond S."/>
            <person name="Banerjee R."/>
            <person name="Chi J."/>
            <person name="Fu B."/>
            <person name="Langley E."/>
            <person name="Maguire S.F."/>
            <person name="Laird G.K."/>
            <person name="Lloyd D."/>
            <person name="Kenyon E."/>
            <person name="Donaldson S."/>
            <person name="Sehra H."/>
            <person name="Almeida-King J."/>
            <person name="Loveland J."/>
            <person name="Trevanion S."/>
            <person name="Jones M."/>
            <person name="Quail M."/>
            <person name="Willey D."/>
            <person name="Hunt A."/>
            <person name="Burton J."/>
            <person name="Sims S."/>
            <person name="McLay K."/>
            <person name="Plumb B."/>
            <person name="Davis J."/>
            <person name="Clee C."/>
            <person name="Oliver K."/>
            <person name="Clark R."/>
            <person name="Riddle C."/>
            <person name="Elliot D."/>
            <person name="Threadgold G."/>
            <person name="Harden G."/>
            <person name="Ware D."/>
            <person name="Begum S."/>
            <person name="Mortimore B."/>
            <person name="Kerry G."/>
            <person name="Heath P."/>
            <person name="Phillimore B."/>
            <person name="Tracey A."/>
            <person name="Corby N."/>
            <person name="Dunn M."/>
            <person name="Johnson C."/>
            <person name="Wood J."/>
            <person name="Clark S."/>
            <person name="Pelan S."/>
            <person name="Griffiths G."/>
            <person name="Smith M."/>
            <person name="Glithero R."/>
            <person name="Howden P."/>
            <person name="Barker N."/>
            <person name="Lloyd C."/>
            <person name="Stevens C."/>
            <person name="Harley J."/>
            <person name="Holt K."/>
            <person name="Panagiotidis G."/>
            <person name="Lovell J."/>
            <person name="Beasley H."/>
            <person name="Henderson C."/>
            <person name="Gordon D."/>
            <person name="Auger K."/>
            <person name="Wright D."/>
            <person name="Collins J."/>
            <person name="Raisen C."/>
            <person name="Dyer L."/>
            <person name="Leung K."/>
            <person name="Robertson L."/>
            <person name="Ambridge K."/>
            <person name="Leongamornlert D."/>
            <person name="McGuire S."/>
            <person name="Gilderthorp R."/>
            <person name="Griffiths C."/>
            <person name="Manthravadi D."/>
            <person name="Nichol S."/>
            <person name="Barker G."/>
            <person name="Whitehead S."/>
            <person name="Kay M."/>
            <person name="Brown J."/>
            <person name="Murnane C."/>
            <person name="Gray E."/>
            <person name="Humphries M."/>
            <person name="Sycamore N."/>
            <person name="Barker D."/>
            <person name="Saunders D."/>
            <person name="Wallis J."/>
            <person name="Babbage A."/>
            <person name="Hammond S."/>
            <person name="Mashreghi-Mohammadi M."/>
            <person name="Barr L."/>
            <person name="Martin S."/>
            <person name="Wray P."/>
            <person name="Ellington A."/>
            <person name="Matthews N."/>
            <person name="Ellwood M."/>
            <person name="Woodmansey R."/>
            <person name="Clark G."/>
            <person name="Cooper J."/>
            <person name="Tromans A."/>
            <person name="Grafham D."/>
            <person name="Skuce C."/>
            <person name="Pandian R."/>
            <person name="Andrews R."/>
            <person name="Harrison E."/>
            <person name="Kimberley A."/>
            <person name="Garnett J."/>
            <person name="Fosker N."/>
            <person name="Hall R."/>
            <person name="Garner P."/>
            <person name="Kelly D."/>
            <person name="Bird C."/>
            <person name="Palmer S."/>
            <person name="Gehring I."/>
            <person name="Berger A."/>
            <person name="Dooley C.M."/>
            <person name="Ersan-Urun Z."/>
            <person name="Eser C."/>
            <person name="Geiger H."/>
            <person name="Geisler M."/>
            <person name="Karotki L."/>
            <person name="Kirn A."/>
            <person name="Konantz J."/>
            <person name="Konantz M."/>
            <person name="Oberlander M."/>
            <person name="Rudolph-Geiger S."/>
            <person name="Teucke M."/>
            <person name="Lanz C."/>
            <person name="Raddatz G."/>
            <person name="Osoegawa K."/>
            <person name="Zhu B."/>
            <person name="Rapp A."/>
            <person name="Widaa S."/>
            <person name="Langford C."/>
            <person name="Yang F."/>
            <person name="Schuster S.C."/>
            <person name="Carter N.P."/>
            <person name="Harrow J."/>
            <person name="Ning Z."/>
            <person name="Herrero J."/>
            <person name="Searle S.M."/>
            <person name="Enright A."/>
            <person name="Geisler R."/>
            <person name="Plasterk R.H."/>
            <person name="Lee C."/>
            <person name="Westerfield M."/>
            <person name="de Jong P.J."/>
            <person name="Zon L.I."/>
            <person name="Postlethwait J.H."/>
            <person name="Nusslein-Volhard C."/>
            <person name="Hubbard T.J."/>
            <person name="Roest Crollius H."/>
            <person name="Rogers J."/>
            <person name="Stemple D.L."/>
        </authorList>
    </citation>
    <scope>NUCLEOTIDE SEQUENCE [LARGE SCALE GENOMIC DNA]</scope>
    <source>
        <strain>Tuebingen</strain>
    </source>
</reference>
<reference key="4">
    <citation type="journal article" date="2000" name="Mech. Dev.">
        <title>Developmental regulation of Tbx5 in zebrafish embryogenesis.</title>
        <authorList>
            <person name="Begemann G."/>
            <person name="Ingham P.W."/>
        </authorList>
    </citation>
    <scope>NUCLEOTIDE SEQUENCE [MRNA] OF 31-402</scope>
</reference>
<reference key="5">
    <citation type="journal article" date="2002" name="Development">
        <title>The heartstrings mutation in zebrafish causes heart/fin Tbx5 deficiency syndrome.</title>
        <authorList>
            <person name="Garrity D.M."/>
            <person name="Childs S."/>
            <person name="Fishman M.C."/>
        </authorList>
    </citation>
    <scope>FUNCTION</scope>
    <scope>TISSUE SPECIFICITY</scope>
</reference>
<reference key="6">
    <citation type="journal article" date="2010" name="Gene Expr. Patterns">
        <title>Identification and characterisation of the developmental expression pattern of tbx5b, a novel tbx5 gene in zebrafish.</title>
        <authorList>
            <person name="Albalat R."/>
            <person name="Baquero M."/>
            <person name="Minguillon C."/>
        </authorList>
    </citation>
    <scope>FUNCTION</scope>
    <scope>TISSUE SPECIFICITY</scope>
    <scope>GENE DUPLICATION</scope>
</reference>
<dbReference type="EMBL" id="AF152607">
    <property type="protein sequence ID" value="AAF06733.1"/>
    <property type="status" value="ALT_FRAME"/>
    <property type="molecule type" value="mRNA"/>
</dbReference>
<dbReference type="EMBL" id="AF179407">
    <property type="protein sequence ID" value="AAF59837.1"/>
    <property type="molecule type" value="mRNA"/>
</dbReference>
<dbReference type="EMBL" id="CU181811">
    <property type="protein sequence ID" value="CAX14227.1"/>
    <property type="molecule type" value="Genomic_DNA"/>
</dbReference>
<dbReference type="EMBL" id="AF185283">
    <property type="protein sequence ID" value="AAF22296.1"/>
    <property type="molecule type" value="mRNA"/>
</dbReference>
<dbReference type="RefSeq" id="NP_001300611.1">
    <property type="nucleotide sequence ID" value="NM_001313682.1"/>
</dbReference>
<dbReference type="RefSeq" id="XP_005168260.1">
    <property type="nucleotide sequence ID" value="XM_005168203.3"/>
</dbReference>
<dbReference type="RefSeq" id="XP_021331670.1">
    <property type="nucleotide sequence ID" value="XM_021475995.2"/>
</dbReference>
<dbReference type="RefSeq" id="XP_068077191.1">
    <property type="nucleotide sequence ID" value="XM_068221090.1"/>
</dbReference>
<dbReference type="SMR" id="Q9IAK8"/>
<dbReference type="BioGRID" id="78315">
    <property type="interactions" value="1"/>
</dbReference>
<dbReference type="FunCoup" id="Q9IAK8">
    <property type="interactions" value="272"/>
</dbReference>
<dbReference type="STRING" id="7955.ENSDARP00000033053"/>
<dbReference type="PaxDb" id="7955-ENSDARP00000033053"/>
<dbReference type="Ensembl" id="ENSDART00000037691">
    <property type="protein sequence ID" value="ENSDARP00000033053"/>
    <property type="gene ID" value="ENSDARG00000024894"/>
</dbReference>
<dbReference type="GeneID" id="30071"/>
<dbReference type="KEGG" id="dre:30071"/>
<dbReference type="AGR" id="ZFIN:ZDB-GENE-991124-7"/>
<dbReference type="CTD" id="30071"/>
<dbReference type="ZFIN" id="ZDB-GENE-991124-7">
    <property type="gene designation" value="tbx5a"/>
</dbReference>
<dbReference type="eggNOG" id="KOG3585">
    <property type="taxonomic scope" value="Eukaryota"/>
</dbReference>
<dbReference type="InParanoid" id="Q9IAK8"/>
<dbReference type="OMA" id="CMYASSV"/>
<dbReference type="OrthoDB" id="7442607at2759"/>
<dbReference type="PhylomeDB" id="Q9IAK8"/>
<dbReference type="TreeFam" id="TF106341"/>
<dbReference type="Reactome" id="R-DRE-2032785">
    <property type="pathway name" value="YAP1- and WWTR1 (TAZ)-stimulated gene expression"/>
</dbReference>
<dbReference type="PRO" id="PR:Q9IAK8"/>
<dbReference type="Proteomes" id="UP000000437">
    <property type="component" value="Chromosome 5"/>
</dbReference>
<dbReference type="Bgee" id="ENSDARG00000024894">
    <property type="expression patterns" value="Expressed in paired fin and 39 other cell types or tissues"/>
</dbReference>
<dbReference type="GO" id="GO:0015629">
    <property type="term" value="C:actin cytoskeleton"/>
    <property type="evidence" value="ECO:0000353"/>
    <property type="project" value="ZFIN"/>
</dbReference>
<dbReference type="GO" id="GO:0000785">
    <property type="term" value="C:chromatin"/>
    <property type="evidence" value="ECO:0000318"/>
    <property type="project" value="GO_Central"/>
</dbReference>
<dbReference type="GO" id="GO:0005737">
    <property type="term" value="C:cytoplasm"/>
    <property type="evidence" value="ECO:0000250"/>
    <property type="project" value="UniProtKB"/>
</dbReference>
<dbReference type="GO" id="GO:0005634">
    <property type="term" value="C:nucleus"/>
    <property type="evidence" value="ECO:0000314"/>
    <property type="project" value="ZFIN"/>
</dbReference>
<dbReference type="GO" id="GO:0032991">
    <property type="term" value="C:protein-containing complex"/>
    <property type="evidence" value="ECO:0000250"/>
    <property type="project" value="UniProtKB"/>
</dbReference>
<dbReference type="GO" id="GO:0032993">
    <property type="term" value="C:protein-DNA complex"/>
    <property type="evidence" value="ECO:0000250"/>
    <property type="project" value="UniProtKB"/>
</dbReference>
<dbReference type="GO" id="GO:0003700">
    <property type="term" value="F:DNA-binding transcription factor activity"/>
    <property type="evidence" value="ECO:0000314"/>
    <property type="project" value="ZFIN"/>
</dbReference>
<dbReference type="GO" id="GO:0000981">
    <property type="term" value="F:DNA-binding transcription factor activity, RNA polymerase II-specific"/>
    <property type="evidence" value="ECO:0000250"/>
    <property type="project" value="UniProtKB"/>
</dbReference>
<dbReference type="GO" id="GO:0000978">
    <property type="term" value="F:RNA polymerase II cis-regulatory region sequence-specific DNA binding"/>
    <property type="evidence" value="ECO:0000250"/>
    <property type="project" value="UniProtKB"/>
</dbReference>
<dbReference type="GO" id="GO:0061629">
    <property type="term" value="F:RNA polymerase II-specific DNA-binding transcription factor binding"/>
    <property type="evidence" value="ECO:0000353"/>
    <property type="project" value="ZFIN"/>
</dbReference>
<dbReference type="GO" id="GO:0043565">
    <property type="term" value="F:sequence-specific DNA binding"/>
    <property type="evidence" value="ECO:0000314"/>
    <property type="project" value="ZFIN"/>
</dbReference>
<dbReference type="GO" id="GO:0009887">
    <property type="term" value="P:animal organ morphogenesis"/>
    <property type="evidence" value="ECO:0000315"/>
    <property type="project" value="ZFIN"/>
</dbReference>
<dbReference type="GO" id="GO:0003294">
    <property type="term" value="P:atrial ventricular junction remodeling"/>
    <property type="evidence" value="ECO:0000315"/>
    <property type="project" value="ZFIN"/>
</dbReference>
<dbReference type="GO" id="GO:0036302">
    <property type="term" value="P:atrioventricular canal development"/>
    <property type="evidence" value="ECO:0000316"/>
    <property type="project" value="ZFIN"/>
</dbReference>
<dbReference type="GO" id="GO:0003190">
    <property type="term" value="P:atrioventricular valve formation"/>
    <property type="evidence" value="ECO:0000315"/>
    <property type="project" value="ZFIN"/>
</dbReference>
<dbReference type="GO" id="GO:0003206">
    <property type="term" value="P:cardiac chamber morphogenesis"/>
    <property type="evidence" value="ECO:0000315"/>
    <property type="project" value="ZFIN"/>
</dbReference>
<dbReference type="GO" id="GO:0003218">
    <property type="term" value="P:cardiac left ventricle formation"/>
    <property type="evidence" value="ECO:0000318"/>
    <property type="project" value="GO_Central"/>
</dbReference>
<dbReference type="GO" id="GO:0055007">
    <property type="term" value="P:cardiac muscle cell differentiation"/>
    <property type="evidence" value="ECO:0000316"/>
    <property type="project" value="ZFIN"/>
</dbReference>
<dbReference type="GO" id="GO:0061026">
    <property type="term" value="P:cardiac muscle tissue regeneration"/>
    <property type="evidence" value="ECO:0000315"/>
    <property type="project" value="ZFIN"/>
</dbReference>
<dbReference type="GO" id="GO:0001708">
    <property type="term" value="P:cell fate specification"/>
    <property type="evidence" value="ECO:0000318"/>
    <property type="project" value="GO_Central"/>
</dbReference>
<dbReference type="GO" id="GO:0006351">
    <property type="term" value="P:DNA-templated transcription"/>
    <property type="evidence" value="ECO:0000315"/>
    <property type="project" value="ZFIN"/>
</dbReference>
<dbReference type="GO" id="GO:0035050">
    <property type="term" value="P:embryonic heart tube development"/>
    <property type="evidence" value="ECO:0000315"/>
    <property type="project" value="ZFIN"/>
</dbReference>
<dbReference type="GO" id="GO:0003143">
    <property type="term" value="P:embryonic heart tube morphogenesis"/>
    <property type="evidence" value="ECO:0000315"/>
    <property type="project" value="ZFIN"/>
</dbReference>
<dbReference type="GO" id="GO:0035118">
    <property type="term" value="P:embryonic pectoral fin morphogenesis"/>
    <property type="evidence" value="ECO:0000315"/>
    <property type="project" value="ZFIN"/>
</dbReference>
<dbReference type="GO" id="GO:0007507">
    <property type="term" value="P:heart development"/>
    <property type="evidence" value="ECO:0000315"/>
    <property type="project" value="ZFIN"/>
</dbReference>
<dbReference type="GO" id="GO:0003146">
    <property type="term" value="P:heart jogging"/>
    <property type="evidence" value="ECO:0000315"/>
    <property type="project" value="ZFIN"/>
</dbReference>
<dbReference type="GO" id="GO:0001947">
    <property type="term" value="P:heart looping"/>
    <property type="evidence" value="ECO:0000315"/>
    <property type="project" value="ZFIN"/>
</dbReference>
<dbReference type="GO" id="GO:0003007">
    <property type="term" value="P:heart morphogenesis"/>
    <property type="evidence" value="ECO:0000315"/>
    <property type="project" value="ZFIN"/>
</dbReference>
<dbReference type="GO" id="GO:0060174">
    <property type="term" value="P:limb bud formation"/>
    <property type="evidence" value="ECO:0000315"/>
    <property type="project" value="ZFIN"/>
</dbReference>
<dbReference type="GO" id="GO:0021554">
    <property type="term" value="P:optic nerve development"/>
    <property type="evidence" value="ECO:0000316"/>
    <property type="project" value="ZFIN"/>
</dbReference>
<dbReference type="GO" id="GO:0007389">
    <property type="term" value="P:pattern specification process"/>
    <property type="evidence" value="ECO:0000318"/>
    <property type="project" value="GO_Central"/>
</dbReference>
<dbReference type="GO" id="GO:0033339">
    <property type="term" value="P:pectoral fin development"/>
    <property type="evidence" value="ECO:0000315"/>
    <property type="project" value="ZFIN"/>
</dbReference>
<dbReference type="GO" id="GO:0035138">
    <property type="term" value="P:pectoral fin morphogenesis"/>
    <property type="evidence" value="ECO:0000315"/>
    <property type="project" value="ZFIN"/>
</dbReference>
<dbReference type="GO" id="GO:0003344">
    <property type="term" value="P:pericardium morphogenesis"/>
    <property type="evidence" value="ECO:0000315"/>
    <property type="project" value="ZFIN"/>
</dbReference>
<dbReference type="GO" id="GO:0045893">
    <property type="term" value="P:positive regulation of DNA-templated transcription"/>
    <property type="evidence" value="ECO:0000314"/>
    <property type="project" value="ZFIN"/>
</dbReference>
<dbReference type="GO" id="GO:0045944">
    <property type="term" value="P:positive regulation of transcription by RNA polymerase II"/>
    <property type="evidence" value="ECO:0000314"/>
    <property type="project" value="ZFIN"/>
</dbReference>
<dbReference type="GO" id="GO:0003342">
    <property type="term" value="P:proepicardium development"/>
    <property type="evidence" value="ECO:0000315"/>
    <property type="project" value="ZFIN"/>
</dbReference>
<dbReference type="GO" id="GO:0006355">
    <property type="term" value="P:regulation of DNA-templated transcription"/>
    <property type="evidence" value="ECO:0000315"/>
    <property type="project" value="ZFIN"/>
</dbReference>
<dbReference type="GO" id="GO:0006357">
    <property type="term" value="P:regulation of transcription by RNA polymerase II"/>
    <property type="evidence" value="ECO:0000318"/>
    <property type="project" value="GO_Central"/>
</dbReference>
<dbReference type="GO" id="GO:0060042">
    <property type="term" value="P:retina morphogenesis in camera-type eye"/>
    <property type="evidence" value="ECO:0000316"/>
    <property type="project" value="ZFIN"/>
</dbReference>
<dbReference type="CDD" id="cd20189">
    <property type="entry name" value="T-box_TBX4_5-like"/>
    <property type="match status" value="1"/>
</dbReference>
<dbReference type="FunFam" id="2.60.40.820:FF:000005">
    <property type="entry name" value="T-box transcription factor TBX5"/>
    <property type="match status" value="1"/>
</dbReference>
<dbReference type="Gene3D" id="2.60.40.820">
    <property type="entry name" value="Transcription factor, T-box"/>
    <property type="match status" value="1"/>
</dbReference>
<dbReference type="InterPro" id="IPR008967">
    <property type="entry name" value="p53-like_TF_DNA-bd_sf"/>
</dbReference>
<dbReference type="InterPro" id="IPR046360">
    <property type="entry name" value="T-box_DNA-bd"/>
</dbReference>
<dbReference type="InterPro" id="IPR036960">
    <property type="entry name" value="T-box_sf"/>
</dbReference>
<dbReference type="InterPro" id="IPR001699">
    <property type="entry name" value="TF_T-box"/>
</dbReference>
<dbReference type="InterPro" id="IPR018186">
    <property type="entry name" value="TF_T-box_CS"/>
</dbReference>
<dbReference type="PANTHER" id="PTHR11267">
    <property type="entry name" value="T-BOX PROTEIN-RELATED"/>
    <property type="match status" value="1"/>
</dbReference>
<dbReference type="PANTHER" id="PTHR11267:SF28">
    <property type="entry name" value="T-BOX TRANSCRIPTION FACTOR TBX5"/>
    <property type="match status" value="1"/>
</dbReference>
<dbReference type="Pfam" id="PF00907">
    <property type="entry name" value="T-box"/>
    <property type="match status" value="1"/>
</dbReference>
<dbReference type="PRINTS" id="PR00937">
    <property type="entry name" value="TBOX"/>
</dbReference>
<dbReference type="SMART" id="SM00425">
    <property type="entry name" value="TBOX"/>
    <property type="match status" value="1"/>
</dbReference>
<dbReference type="SUPFAM" id="SSF49417">
    <property type="entry name" value="p53-like transcription factors"/>
    <property type="match status" value="1"/>
</dbReference>
<dbReference type="PROSITE" id="PS01283">
    <property type="entry name" value="TBOX_1"/>
    <property type="match status" value="1"/>
</dbReference>
<dbReference type="PROSITE" id="PS01264">
    <property type="entry name" value="TBOX_2"/>
    <property type="match status" value="1"/>
</dbReference>
<dbReference type="PROSITE" id="PS50252">
    <property type="entry name" value="TBOX_3"/>
    <property type="match status" value="1"/>
</dbReference>
<proteinExistence type="evidence at transcript level"/>
<organism>
    <name type="scientific">Danio rerio</name>
    <name type="common">Zebrafish</name>
    <name type="synonym">Brachydanio rerio</name>
    <dbReference type="NCBI Taxonomy" id="7955"/>
    <lineage>
        <taxon>Eukaryota</taxon>
        <taxon>Metazoa</taxon>
        <taxon>Chordata</taxon>
        <taxon>Craniata</taxon>
        <taxon>Vertebrata</taxon>
        <taxon>Euteleostomi</taxon>
        <taxon>Actinopterygii</taxon>
        <taxon>Neopterygii</taxon>
        <taxon>Teleostei</taxon>
        <taxon>Ostariophysi</taxon>
        <taxon>Cypriniformes</taxon>
        <taxon>Danionidae</taxon>
        <taxon>Danioninae</taxon>
        <taxon>Danio</taxon>
    </lineage>
</organism>
<keyword id="KW-0963">Cytoplasm</keyword>
<keyword id="KW-0217">Developmental protein</keyword>
<keyword id="KW-0238">DNA-binding</keyword>
<keyword id="KW-0539">Nucleus</keyword>
<keyword id="KW-1185">Reference proteome</keyword>
<keyword id="KW-0804">Transcription</keyword>
<keyword id="KW-0805">Transcription regulation</keyword>
<sequence length="492" mass="55183">MADSEDTFRLQNSPSDSEPKDLQNEGKSDKQNAAVSKSPSSQTTYIQQGMEGIKVYLHERELWTKFHEVGTEMIITKAGRRMFPSFKVKVTGLNPKTKYILLMDVVPADDHRYKFADNKWSVTGKAEPAMPGRLYVHPDSPATGAHWMRQLVSFQKLKLTNNHLDPFGHIILNSMHKYQPRIHIVKADENNGFGSKNTAFCTHVFPETAFIAVTSYQNHKITQLKIENNPFAKGFRGSDDMELHRMSRMQSTKEYPVVPRSTVRQRVGSSQSPFSGDVQGLSASGAISSQYSCENGVSSTSQDLLPQSSSYHEHTQDYHCIKRKVEDECPAGEHPYKKPYVESSSSEDDHYYRPLSYSQSLGLSGGAPYRPESSQRQACMYASAPQPPEPVPSLEDISWPGVPPYSVPQMERLPYQHHFSAHFASRQMPEAHGMYASSVSHQCSPSGGIQSPSAGLQGNEYLYAHGLQRTLSPHQYHTVHSVSIMHDWNEAS</sequence>
<evidence type="ECO:0000250" key="1">
    <source>
        <dbReference type="UniProtKB" id="Q99593"/>
    </source>
</evidence>
<evidence type="ECO:0000255" key="2">
    <source>
        <dbReference type="PROSITE-ProRule" id="PRU00201"/>
    </source>
</evidence>
<evidence type="ECO:0000256" key="3">
    <source>
        <dbReference type="SAM" id="MobiDB-lite"/>
    </source>
</evidence>
<evidence type="ECO:0000269" key="4">
    <source>
    </source>
</evidence>
<evidence type="ECO:0000269" key="5">
    <source>
    </source>
</evidence>
<evidence type="ECO:0000269" key="6">
    <source>
    </source>
</evidence>
<evidence type="ECO:0000305" key="7"/>
<name>TBX5A_DANRE</name>
<accession>Q9IAK8</accession>
<accession>B8JKS5</accession>
<accession>Q9PTK3</accession>
<accession>Q9PUS7</accession>